<sequence length="591" mass="64967">MNQGKIITVSGPLVVASGMQEANIQDICRVGHLGLVGEIIEMRRDQASIQVYEETSGIGPGEPVVTTGCPLSVELGPGLISEMFDGIQRPLDRFQKATDSDFLIRGVAIPSLDRKAKWAFIPKLSVGQEVVAGDILGTVQETAVIEHRIMVPYKVSGTLVAIHAGDFTVTDTVYEIKKEDGSIYQGSLMQTWPVRQSRPVAQKLIPVEPLVTGQRVIDTFFPVTKGGAAAVPGPFGAGKTVVQHQIAKFANVDIVIYVGCGERGNEMTDVLNEFPELIDPNTGQSIMERTVLIANTSNMPVAAREASIYTGITIAEYFRDMGYSVAIMADSTSRWAEALREMSGRLQEMPGDEGYPAYLGSRIAEYYERAGRVRTLGSQEREGTITAIGAVSPPGGDISEPVTQNTLRIVKVFWGLDAPLAQRRHFPAINWLTSYSLYQDDVGSYIDRKQQSNWSNKVTRAMAILQREASLEEIVRLVGLDSLSEQDRLTMAVARQIREDYLQQNAFDSVDTFTSFPKQEAMLTNILTFNEEASKALSLGAYFNEIMEGTAQVRDRIARSKFIPEENLEQIKGLTQKVTKEIHHVLAKGGI</sequence>
<reference key="1">
    <citation type="journal article" date="2005" name="J. Infect. Dis.">
        <title>Genome sequence of a serotype M28 strain of group A Streptococcus: potential new insights into puerperal sepsis and bacterial disease specificity.</title>
        <authorList>
            <person name="Green N.M."/>
            <person name="Zhang S."/>
            <person name="Porcella S.F."/>
            <person name="Nagiec M.J."/>
            <person name="Barbian K.D."/>
            <person name="Beres S.B."/>
            <person name="Lefebvre R.B."/>
            <person name="Musser J.M."/>
        </authorList>
    </citation>
    <scope>NUCLEOTIDE SEQUENCE [LARGE SCALE GENOMIC DNA]</scope>
    <source>
        <strain>MGAS6180</strain>
    </source>
</reference>
<dbReference type="EC" id="7.1.2.2" evidence="1"/>
<dbReference type="EMBL" id="CP000056">
    <property type="protein sequence ID" value="AAX71243.1"/>
    <property type="molecule type" value="Genomic_DNA"/>
</dbReference>
<dbReference type="RefSeq" id="WP_011284448.1">
    <property type="nucleotide sequence ID" value="NC_007296.2"/>
</dbReference>
<dbReference type="SMR" id="Q48VL3"/>
<dbReference type="KEGG" id="spb:M28_Spy0129"/>
<dbReference type="HOGENOM" id="CLU_008162_3_1_9"/>
<dbReference type="GO" id="GO:0045259">
    <property type="term" value="C:proton-transporting ATP synthase complex"/>
    <property type="evidence" value="ECO:0007669"/>
    <property type="project" value="UniProtKB-ARBA"/>
</dbReference>
<dbReference type="GO" id="GO:0005524">
    <property type="term" value="F:ATP binding"/>
    <property type="evidence" value="ECO:0007669"/>
    <property type="project" value="UniProtKB-UniRule"/>
</dbReference>
<dbReference type="GO" id="GO:0046933">
    <property type="term" value="F:proton-transporting ATP synthase activity, rotational mechanism"/>
    <property type="evidence" value="ECO:0007669"/>
    <property type="project" value="UniProtKB-UniRule"/>
</dbReference>
<dbReference type="GO" id="GO:0046961">
    <property type="term" value="F:proton-transporting ATPase activity, rotational mechanism"/>
    <property type="evidence" value="ECO:0007669"/>
    <property type="project" value="InterPro"/>
</dbReference>
<dbReference type="GO" id="GO:0042777">
    <property type="term" value="P:proton motive force-driven plasma membrane ATP synthesis"/>
    <property type="evidence" value="ECO:0007669"/>
    <property type="project" value="UniProtKB-UniRule"/>
</dbReference>
<dbReference type="CDD" id="cd18111">
    <property type="entry name" value="ATP-synt_V_A-type_alpha_C"/>
    <property type="match status" value="1"/>
</dbReference>
<dbReference type="CDD" id="cd18119">
    <property type="entry name" value="ATP-synt_V_A-type_alpha_N"/>
    <property type="match status" value="1"/>
</dbReference>
<dbReference type="CDD" id="cd01134">
    <property type="entry name" value="V_A-ATPase_A"/>
    <property type="match status" value="1"/>
</dbReference>
<dbReference type="FunFam" id="3.40.50.300:FF:000675">
    <property type="entry name" value="V-type ATP synthase alpha chain"/>
    <property type="match status" value="1"/>
</dbReference>
<dbReference type="FunFam" id="2.40.30.20:FF:000002">
    <property type="entry name" value="V-type proton ATPase catalytic subunit A"/>
    <property type="match status" value="1"/>
</dbReference>
<dbReference type="FunFam" id="2.40.50.100:FF:000008">
    <property type="entry name" value="V-type proton ATPase catalytic subunit A"/>
    <property type="match status" value="1"/>
</dbReference>
<dbReference type="Gene3D" id="2.40.30.20">
    <property type="match status" value="1"/>
</dbReference>
<dbReference type="Gene3D" id="2.40.50.100">
    <property type="match status" value="1"/>
</dbReference>
<dbReference type="Gene3D" id="1.10.1140.10">
    <property type="entry name" value="Bovine Mitochondrial F1-atpase, Atp Synthase Beta Chain, Chain D, domain 3"/>
    <property type="match status" value="1"/>
</dbReference>
<dbReference type="Gene3D" id="3.40.50.300">
    <property type="entry name" value="P-loop containing nucleotide triphosphate hydrolases"/>
    <property type="match status" value="1"/>
</dbReference>
<dbReference type="HAMAP" id="MF_00309">
    <property type="entry name" value="ATP_synth_A_arch"/>
    <property type="match status" value="1"/>
</dbReference>
<dbReference type="InterPro" id="IPR055190">
    <property type="entry name" value="ATP-synt_VA_C"/>
</dbReference>
<dbReference type="InterPro" id="IPR031686">
    <property type="entry name" value="ATP-synth_a_Xtn"/>
</dbReference>
<dbReference type="InterPro" id="IPR023366">
    <property type="entry name" value="ATP_synth_asu-like_sf"/>
</dbReference>
<dbReference type="InterPro" id="IPR020003">
    <property type="entry name" value="ATPase_a/bsu_AS"/>
</dbReference>
<dbReference type="InterPro" id="IPR004100">
    <property type="entry name" value="ATPase_F1/V1/A1_a/bsu_N"/>
</dbReference>
<dbReference type="InterPro" id="IPR036121">
    <property type="entry name" value="ATPase_F1/V1/A1_a/bsu_N_sf"/>
</dbReference>
<dbReference type="InterPro" id="IPR000194">
    <property type="entry name" value="ATPase_F1/V1/A1_a/bsu_nucl-bd"/>
</dbReference>
<dbReference type="InterPro" id="IPR024034">
    <property type="entry name" value="ATPase_F1/V1_b/a_C"/>
</dbReference>
<dbReference type="InterPro" id="IPR027417">
    <property type="entry name" value="P-loop_NTPase"/>
</dbReference>
<dbReference type="InterPro" id="IPR022878">
    <property type="entry name" value="V-ATPase_asu"/>
</dbReference>
<dbReference type="NCBIfam" id="NF003220">
    <property type="entry name" value="PRK04192.1"/>
    <property type="match status" value="1"/>
</dbReference>
<dbReference type="PANTHER" id="PTHR43607:SF1">
    <property type="entry name" value="H(+)-TRANSPORTING TWO-SECTOR ATPASE"/>
    <property type="match status" value="1"/>
</dbReference>
<dbReference type="PANTHER" id="PTHR43607">
    <property type="entry name" value="V-TYPE PROTON ATPASE CATALYTIC SUBUNIT A"/>
    <property type="match status" value="1"/>
</dbReference>
<dbReference type="Pfam" id="PF00006">
    <property type="entry name" value="ATP-synt_ab"/>
    <property type="match status" value="1"/>
</dbReference>
<dbReference type="Pfam" id="PF02874">
    <property type="entry name" value="ATP-synt_ab_N"/>
    <property type="match status" value="1"/>
</dbReference>
<dbReference type="Pfam" id="PF16886">
    <property type="entry name" value="ATP-synt_ab_Xtn"/>
    <property type="match status" value="1"/>
</dbReference>
<dbReference type="Pfam" id="PF22919">
    <property type="entry name" value="ATP-synt_VA_C"/>
    <property type="match status" value="1"/>
</dbReference>
<dbReference type="SUPFAM" id="SSF47917">
    <property type="entry name" value="C-terminal domain of alpha and beta subunits of F1 ATP synthase"/>
    <property type="match status" value="1"/>
</dbReference>
<dbReference type="SUPFAM" id="SSF50615">
    <property type="entry name" value="N-terminal domain of alpha and beta subunits of F1 ATP synthase"/>
    <property type="match status" value="1"/>
</dbReference>
<dbReference type="SUPFAM" id="SSF52540">
    <property type="entry name" value="P-loop containing nucleoside triphosphate hydrolases"/>
    <property type="match status" value="1"/>
</dbReference>
<dbReference type="PROSITE" id="PS00152">
    <property type="entry name" value="ATPASE_ALPHA_BETA"/>
    <property type="match status" value="1"/>
</dbReference>
<name>VATA_STRPM</name>
<proteinExistence type="inferred from homology"/>
<accession>Q48VL3</accession>
<organism>
    <name type="scientific">Streptococcus pyogenes serotype M28 (strain MGAS6180)</name>
    <dbReference type="NCBI Taxonomy" id="319701"/>
    <lineage>
        <taxon>Bacteria</taxon>
        <taxon>Bacillati</taxon>
        <taxon>Bacillota</taxon>
        <taxon>Bacilli</taxon>
        <taxon>Lactobacillales</taxon>
        <taxon>Streptococcaceae</taxon>
        <taxon>Streptococcus</taxon>
    </lineage>
</organism>
<feature type="chain" id="PRO_1000059358" description="V-type ATP synthase alpha chain">
    <location>
        <begin position="1"/>
        <end position="591"/>
    </location>
</feature>
<feature type="binding site" evidence="1">
    <location>
        <begin position="233"/>
        <end position="240"/>
    </location>
    <ligand>
        <name>ATP</name>
        <dbReference type="ChEBI" id="CHEBI:30616"/>
    </ligand>
</feature>
<comment type="function">
    <text evidence="1">Produces ATP from ADP in the presence of a proton gradient across the membrane. The V-type alpha chain is a catalytic subunit.</text>
</comment>
<comment type="catalytic activity">
    <reaction evidence="1">
        <text>ATP + H2O + 4 H(+)(in) = ADP + phosphate + 5 H(+)(out)</text>
        <dbReference type="Rhea" id="RHEA:57720"/>
        <dbReference type="ChEBI" id="CHEBI:15377"/>
        <dbReference type="ChEBI" id="CHEBI:15378"/>
        <dbReference type="ChEBI" id="CHEBI:30616"/>
        <dbReference type="ChEBI" id="CHEBI:43474"/>
        <dbReference type="ChEBI" id="CHEBI:456216"/>
        <dbReference type="EC" id="7.1.2.2"/>
    </reaction>
</comment>
<comment type="similarity">
    <text evidence="1">Belongs to the ATPase alpha/beta chains family.</text>
</comment>
<gene>
    <name evidence="1" type="primary">atpA</name>
    <name type="ordered locus">M28_Spy0129</name>
</gene>
<keyword id="KW-0066">ATP synthesis</keyword>
<keyword id="KW-0067">ATP-binding</keyword>
<keyword id="KW-0375">Hydrogen ion transport</keyword>
<keyword id="KW-0406">Ion transport</keyword>
<keyword id="KW-0547">Nucleotide-binding</keyword>
<keyword id="KW-1278">Translocase</keyword>
<keyword id="KW-0813">Transport</keyword>
<protein>
    <recommendedName>
        <fullName evidence="1">V-type ATP synthase alpha chain</fullName>
        <ecNumber evidence="1">7.1.2.2</ecNumber>
    </recommendedName>
    <alternativeName>
        <fullName evidence="1">V-ATPase subunit A</fullName>
    </alternativeName>
</protein>
<evidence type="ECO:0000255" key="1">
    <source>
        <dbReference type="HAMAP-Rule" id="MF_00309"/>
    </source>
</evidence>